<keyword id="KW-0997">Cell inner membrane</keyword>
<keyword id="KW-1003">Cell membrane</keyword>
<keyword id="KW-0472">Membrane</keyword>
<keyword id="KW-1185">Reference proteome</keyword>
<keyword id="KW-0808">Transferase</keyword>
<keyword id="KW-0812">Transmembrane</keyword>
<keyword id="KW-1133">Transmembrane helix</keyword>
<organism>
    <name type="scientific">Buchnera aphidicola subsp. Acyrthosiphon pisum (strain APS)</name>
    <name type="common">Acyrthosiphon pisum symbiotic bacterium</name>
    <dbReference type="NCBI Taxonomy" id="107806"/>
    <lineage>
        <taxon>Bacteria</taxon>
        <taxon>Pseudomonadati</taxon>
        <taxon>Pseudomonadota</taxon>
        <taxon>Gammaproteobacteria</taxon>
        <taxon>Enterobacterales</taxon>
        <taxon>Erwiniaceae</taxon>
        <taxon>Buchnera</taxon>
    </lineage>
</organism>
<accession>P57514</accession>
<name>LGT_BUCAI</name>
<feature type="chain" id="PRO_0000172570" description="Phosphatidylglycerol--prolipoprotein diacylglyceryl transferase">
    <location>
        <begin position="1"/>
        <end position="281"/>
    </location>
</feature>
<feature type="transmembrane region" description="Helical" evidence="1">
    <location>
        <begin position="11"/>
        <end position="31"/>
    </location>
</feature>
<feature type="transmembrane region" description="Helical" evidence="1">
    <location>
        <begin position="57"/>
        <end position="77"/>
    </location>
</feature>
<feature type="transmembrane region" description="Helical" evidence="1">
    <location>
        <begin position="89"/>
        <end position="109"/>
    </location>
</feature>
<feature type="transmembrane region" description="Helical" evidence="1">
    <location>
        <begin position="194"/>
        <end position="214"/>
    </location>
</feature>
<feature type="transmembrane region" description="Helical" evidence="1">
    <location>
        <begin position="222"/>
        <end position="242"/>
    </location>
</feature>
<feature type="transmembrane region" description="Helical" evidence="1">
    <location>
        <begin position="255"/>
        <end position="275"/>
    </location>
</feature>
<feature type="binding site" evidence="1">
    <location>
        <position position="140"/>
    </location>
    <ligand>
        <name>a 1,2-diacyl-sn-glycero-3-phospho-(1'-sn-glycerol)</name>
        <dbReference type="ChEBI" id="CHEBI:64716"/>
    </ligand>
</feature>
<evidence type="ECO:0000255" key="1">
    <source>
        <dbReference type="HAMAP-Rule" id="MF_01147"/>
    </source>
</evidence>
<evidence type="ECO:0000305" key="2"/>
<gene>
    <name evidence="1" type="primary">lgt</name>
    <name type="ordered locus">BU439</name>
</gene>
<sequence length="281" mass="32872">MYIFFPKLNPIIFTIGPVSARWYGFMYVISFLFAMWYGKKCSIKNKKIWYEKKIETLLYSIFLGSCIGGRIGYIIFYNFSYYSQNMLSVFYIWEGGMSFHGGLIGAIIVMSYFSFKYKKKILEISDFITPLIPFGLGAGRIGNFINSELWGRVSPNFSYAMIFPNSQNQDLKEIKKYPELQLLLDQYGALPRHPTQLYEFFLEGILLFFIIYFFSKKDRPTGSISGLFLIFYGLFRIFIEFFREPDPQIGLLKNIITMGQILSLPMIIAGLIIMYKSYYKK</sequence>
<reference key="1">
    <citation type="journal article" date="2000" name="Nature">
        <title>Genome sequence of the endocellular bacterial symbiont of aphids Buchnera sp. APS.</title>
        <authorList>
            <person name="Shigenobu S."/>
            <person name="Watanabe H."/>
            <person name="Hattori M."/>
            <person name="Sakaki Y."/>
            <person name="Ishikawa H."/>
        </authorList>
    </citation>
    <scope>NUCLEOTIDE SEQUENCE [LARGE SCALE GENOMIC DNA]</scope>
    <source>
        <strain>APS</strain>
    </source>
</reference>
<dbReference type="EC" id="2.5.1.145" evidence="1"/>
<dbReference type="EMBL" id="BA000003">
    <property type="protein sequence ID" value="BAB13137.1"/>
    <property type="molecule type" value="Genomic_DNA"/>
</dbReference>
<dbReference type="RefSeq" id="NP_240251.1">
    <property type="nucleotide sequence ID" value="NC_002528.1"/>
</dbReference>
<dbReference type="RefSeq" id="WP_010896116.1">
    <property type="nucleotide sequence ID" value="NC_002528.1"/>
</dbReference>
<dbReference type="SMR" id="P57514"/>
<dbReference type="STRING" id="563178.BUAP5A_432"/>
<dbReference type="EnsemblBacteria" id="BAB13137">
    <property type="protein sequence ID" value="BAB13137"/>
    <property type="gene ID" value="BAB13137"/>
</dbReference>
<dbReference type="KEGG" id="buc:BU439"/>
<dbReference type="PATRIC" id="fig|107806.10.peg.448"/>
<dbReference type="eggNOG" id="COG0682">
    <property type="taxonomic scope" value="Bacteria"/>
</dbReference>
<dbReference type="HOGENOM" id="CLU_013386_1_0_6"/>
<dbReference type="UniPathway" id="UPA00664"/>
<dbReference type="Proteomes" id="UP000001806">
    <property type="component" value="Chromosome"/>
</dbReference>
<dbReference type="GO" id="GO:0005886">
    <property type="term" value="C:plasma membrane"/>
    <property type="evidence" value="ECO:0007669"/>
    <property type="project" value="UniProtKB-SubCell"/>
</dbReference>
<dbReference type="GO" id="GO:0008961">
    <property type="term" value="F:phosphatidylglycerol-prolipoprotein diacylglyceryl transferase activity"/>
    <property type="evidence" value="ECO:0007669"/>
    <property type="project" value="UniProtKB-UniRule"/>
</dbReference>
<dbReference type="GO" id="GO:0042158">
    <property type="term" value="P:lipoprotein biosynthetic process"/>
    <property type="evidence" value="ECO:0007669"/>
    <property type="project" value="UniProtKB-UniRule"/>
</dbReference>
<dbReference type="HAMAP" id="MF_01147">
    <property type="entry name" value="Lgt"/>
    <property type="match status" value="1"/>
</dbReference>
<dbReference type="InterPro" id="IPR001640">
    <property type="entry name" value="Lgt"/>
</dbReference>
<dbReference type="NCBIfam" id="TIGR00544">
    <property type="entry name" value="lgt"/>
    <property type="match status" value="1"/>
</dbReference>
<dbReference type="PANTHER" id="PTHR30589:SF0">
    <property type="entry name" value="PHOSPHATIDYLGLYCEROL--PROLIPOPROTEIN DIACYLGLYCERYL TRANSFERASE"/>
    <property type="match status" value="1"/>
</dbReference>
<dbReference type="PANTHER" id="PTHR30589">
    <property type="entry name" value="PROLIPOPROTEIN DIACYLGLYCERYL TRANSFERASE"/>
    <property type="match status" value="1"/>
</dbReference>
<dbReference type="Pfam" id="PF01790">
    <property type="entry name" value="LGT"/>
    <property type="match status" value="1"/>
</dbReference>
<dbReference type="PROSITE" id="PS01311">
    <property type="entry name" value="LGT"/>
    <property type="match status" value="1"/>
</dbReference>
<comment type="function">
    <text evidence="1">Catalyzes the transfer of the diacylglyceryl group from phosphatidylglycerol to the sulfhydryl group of the N-terminal cysteine of a prolipoprotein, the first step in the formation of mature lipoproteins.</text>
</comment>
<comment type="catalytic activity">
    <reaction evidence="1">
        <text>L-cysteinyl-[prolipoprotein] + a 1,2-diacyl-sn-glycero-3-phospho-(1'-sn-glycerol) = an S-1,2-diacyl-sn-glyceryl-L-cysteinyl-[prolipoprotein] + sn-glycerol 1-phosphate + H(+)</text>
        <dbReference type="Rhea" id="RHEA:56712"/>
        <dbReference type="Rhea" id="RHEA-COMP:14679"/>
        <dbReference type="Rhea" id="RHEA-COMP:14680"/>
        <dbReference type="ChEBI" id="CHEBI:15378"/>
        <dbReference type="ChEBI" id="CHEBI:29950"/>
        <dbReference type="ChEBI" id="CHEBI:57685"/>
        <dbReference type="ChEBI" id="CHEBI:64716"/>
        <dbReference type="ChEBI" id="CHEBI:140658"/>
        <dbReference type="EC" id="2.5.1.145"/>
    </reaction>
</comment>
<comment type="pathway">
    <text evidence="1">Protein modification; lipoprotein biosynthesis (diacylglyceryl transfer).</text>
</comment>
<comment type="subcellular location">
    <subcellularLocation>
        <location evidence="1">Cell inner membrane</location>
        <topology evidence="1">Multi-pass membrane protein</topology>
    </subcellularLocation>
</comment>
<comment type="similarity">
    <text evidence="1 2">Belongs to the Lgt family.</text>
</comment>
<protein>
    <recommendedName>
        <fullName evidence="1">Phosphatidylglycerol--prolipoprotein diacylglyceryl transferase</fullName>
        <ecNumber evidence="1">2.5.1.145</ecNumber>
    </recommendedName>
</protein>
<proteinExistence type="inferred from homology"/>